<sequence>MSKIVKVIGREIIDSRGNPTVEAEVHLEGGFVGMAAAPSGASTGSREALELRDGDKSRFLGKGVTKAVGAVNGPIAQAILGKDAKDQAGIDKIMIDLDGTENKSNFGANAILAVSLANAKAAAAAKGMPLYEHIAELNGTPGKYSMPVPMMNIINGGEHADNNVDIQEFMIQPVGAKTVKEAIRMGSEVFHHLAKVLKGKGMNTAVGDEGGYAPNLGSNAEALAVIAEAVKAAGYELGKDITLAMDCAASEFYKDGKYVLAGEGNKAFTSEEFTHFLEELTKQYPIVSIEDGLDESDWDGFAYQTKVLGDKIQLVGDDLFVTNTKILKEGIEKGIANSILIKFNQIGSLTETLAAIKMAKDAGYTAVISHRSGETEDATIADLAVGTAAGQIKTGSMSRSDRVAKYNQLIRIEEALGEKAPYNGRKEIKGQA</sequence>
<protein>
    <recommendedName>
        <fullName evidence="2">Enolase</fullName>
        <ecNumber evidence="2">4.2.1.11</ecNumber>
    </recommendedName>
    <alternativeName>
        <fullName evidence="2">2-phospho-D-glycerate hydro-lyase</fullName>
    </alternativeName>
    <alternativeName>
        <fullName evidence="2">2-phosphoglycerate dehydratase</fullName>
    </alternativeName>
</protein>
<name>ENO_SALTI</name>
<organism>
    <name type="scientific">Salmonella typhi</name>
    <dbReference type="NCBI Taxonomy" id="90370"/>
    <lineage>
        <taxon>Bacteria</taxon>
        <taxon>Pseudomonadati</taxon>
        <taxon>Pseudomonadota</taxon>
        <taxon>Gammaproteobacteria</taxon>
        <taxon>Enterobacterales</taxon>
        <taxon>Enterobacteriaceae</taxon>
        <taxon>Salmonella</taxon>
    </lineage>
</organism>
<dbReference type="EC" id="4.2.1.11" evidence="2"/>
<dbReference type="EMBL" id="AL513382">
    <property type="protein sequence ID" value="CAD06058.1"/>
    <property type="molecule type" value="Genomic_DNA"/>
</dbReference>
<dbReference type="EMBL" id="AE014613">
    <property type="protein sequence ID" value="AAO70410.1"/>
    <property type="molecule type" value="Genomic_DNA"/>
</dbReference>
<dbReference type="RefSeq" id="NP_457341.1">
    <property type="nucleotide sequence ID" value="NC_003198.1"/>
</dbReference>
<dbReference type="RefSeq" id="WP_000036734.1">
    <property type="nucleotide sequence ID" value="NZ_WSUR01000005.1"/>
</dbReference>
<dbReference type="SMR" id="P64077"/>
<dbReference type="STRING" id="220341.gene:17586968"/>
<dbReference type="GeneID" id="66757270"/>
<dbReference type="KEGG" id="stt:t2853"/>
<dbReference type="KEGG" id="sty:STY3081"/>
<dbReference type="PATRIC" id="fig|220341.7.peg.3135"/>
<dbReference type="eggNOG" id="COG0148">
    <property type="taxonomic scope" value="Bacteria"/>
</dbReference>
<dbReference type="HOGENOM" id="CLU_031223_2_1_6"/>
<dbReference type="OMA" id="RCMMSHR"/>
<dbReference type="OrthoDB" id="9804716at2"/>
<dbReference type="UniPathway" id="UPA00109">
    <property type="reaction ID" value="UER00187"/>
</dbReference>
<dbReference type="Proteomes" id="UP000000541">
    <property type="component" value="Chromosome"/>
</dbReference>
<dbReference type="Proteomes" id="UP000002670">
    <property type="component" value="Chromosome"/>
</dbReference>
<dbReference type="GO" id="GO:0009986">
    <property type="term" value="C:cell surface"/>
    <property type="evidence" value="ECO:0007669"/>
    <property type="project" value="UniProtKB-SubCell"/>
</dbReference>
<dbReference type="GO" id="GO:0005576">
    <property type="term" value="C:extracellular region"/>
    <property type="evidence" value="ECO:0007669"/>
    <property type="project" value="UniProtKB-SubCell"/>
</dbReference>
<dbReference type="GO" id="GO:0000015">
    <property type="term" value="C:phosphopyruvate hydratase complex"/>
    <property type="evidence" value="ECO:0007669"/>
    <property type="project" value="InterPro"/>
</dbReference>
<dbReference type="GO" id="GO:0000287">
    <property type="term" value="F:magnesium ion binding"/>
    <property type="evidence" value="ECO:0007669"/>
    <property type="project" value="UniProtKB-UniRule"/>
</dbReference>
<dbReference type="GO" id="GO:0004634">
    <property type="term" value="F:phosphopyruvate hydratase activity"/>
    <property type="evidence" value="ECO:0007669"/>
    <property type="project" value="UniProtKB-UniRule"/>
</dbReference>
<dbReference type="GO" id="GO:0006096">
    <property type="term" value="P:glycolytic process"/>
    <property type="evidence" value="ECO:0007669"/>
    <property type="project" value="UniProtKB-UniRule"/>
</dbReference>
<dbReference type="CDD" id="cd03313">
    <property type="entry name" value="enolase"/>
    <property type="match status" value="1"/>
</dbReference>
<dbReference type="FunFam" id="3.20.20.120:FF:000001">
    <property type="entry name" value="Enolase"/>
    <property type="match status" value="1"/>
</dbReference>
<dbReference type="FunFam" id="3.30.390.10:FF:000001">
    <property type="entry name" value="Enolase"/>
    <property type="match status" value="1"/>
</dbReference>
<dbReference type="Gene3D" id="3.20.20.120">
    <property type="entry name" value="Enolase-like C-terminal domain"/>
    <property type="match status" value="1"/>
</dbReference>
<dbReference type="Gene3D" id="3.30.390.10">
    <property type="entry name" value="Enolase-like, N-terminal domain"/>
    <property type="match status" value="1"/>
</dbReference>
<dbReference type="HAMAP" id="MF_00318">
    <property type="entry name" value="Enolase"/>
    <property type="match status" value="1"/>
</dbReference>
<dbReference type="InterPro" id="IPR000941">
    <property type="entry name" value="Enolase"/>
</dbReference>
<dbReference type="InterPro" id="IPR036849">
    <property type="entry name" value="Enolase-like_C_sf"/>
</dbReference>
<dbReference type="InterPro" id="IPR029017">
    <property type="entry name" value="Enolase-like_N"/>
</dbReference>
<dbReference type="InterPro" id="IPR020810">
    <property type="entry name" value="Enolase_C"/>
</dbReference>
<dbReference type="InterPro" id="IPR020809">
    <property type="entry name" value="Enolase_CS"/>
</dbReference>
<dbReference type="InterPro" id="IPR020811">
    <property type="entry name" value="Enolase_N"/>
</dbReference>
<dbReference type="NCBIfam" id="TIGR01060">
    <property type="entry name" value="eno"/>
    <property type="match status" value="1"/>
</dbReference>
<dbReference type="PANTHER" id="PTHR11902">
    <property type="entry name" value="ENOLASE"/>
    <property type="match status" value="1"/>
</dbReference>
<dbReference type="PANTHER" id="PTHR11902:SF1">
    <property type="entry name" value="ENOLASE"/>
    <property type="match status" value="1"/>
</dbReference>
<dbReference type="Pfam" id="PF00113">
    <property type="entry name" value="Enolase_C"/>
    <property type="match status" value="1"/>
</dbReference>
<dbReference type="Pfam" id="PF03952">
    <property type="entry name" value="Enolase_N"/>
    <property type="match status" value="1"/>
</dbReference>
<dbReference type="PIRSF" id="PIRSF001400">
    <property type="entry name" value="Enolase"/>
    <property type="match status" value="1"/>
</dbReference>
<dbReference type="PRINTS" id="PR00148">
    <property type="entry name" value="ENOLASE"/>
</dbReference>
<dbReference type="SFLD" id="SFLDF00002">
    <property type="entry name" value="enolase"/>
    <property type="match status" value="1"/>
</dbReference>
<dbReference type="SFLD" id="SFLDG00178">
    <property type="entry name" value="enolase"/>
    <property type="match status" value="1"/>
</dbReference>
<dbReference type="SMART" id="SM01192">
    <property type="entry name" value="Enolase_C"/>
    <property type="match status" value="1"/>
</dbReference>
<dbReference type="SMART" id="SM01193">
    <property type="entry name" value="Enolase_N"/>
    <property type="match status" value="1"/>
</dbReference>
<dbReference type="SUPFAM" id="SSF51604">
    <property type="entry name" value="Enolase C-terminal domain-like"/>
    <property type="match status" value="1"/>
</dbReference>
<dbReference type="SUPFAM" id="SSF54826">
    <property type="entry name" value="Enolase N-terminal domain-like"/>
    <property type="match status" value="1"/>
</dbReference>
<dbReference type="PROSITE" id="PS00164">
    <property type="entry name" value="ENOLASE"/>
    <property type="match status" value="1"/>
</dbReference>
<proteinExistence type="inferred from homology"/>
<keyword id="KW-0963">Cytoplasm</keyword>
<keyword id="KW-0324">Glycolysis</keyword>
<keyword id="KW-0456">Lyase</keyword>
<keyword id="KW-0460">Magnesium</keyword>
<keyword id="KW-0479">Metal-binding</keyword>
<keyword id="KW-0964">Secreted</keyword>
<evidence type="ECO:0000250" key="1"/>
<evidence type="ECO:0000255" key="2">
    <source>
        <dbReference type="HAMAP-Rule" id="MF_00318"/>
    </source>
</evidence>
<reference key="1">
    <citation type="journal article" date="2001" name="Nature">
        <title>Complete genome sequence of a multiple drug resistant Salmonella enterica serovar Typhi CT18.</title>
        <authorList>
            <person name="Parkhill J."/>
            <person name="Dougan G."/>
            <person name="James K.D."/>
            <person name="Thomson N.R."/>
            <person name="Pickard D."/>
            <person name="Wain J."/>
            <person name="Churcher C.M."/>
            <person name="Mungall K.L."/>
            <person name="Bentley S.D."/>
            <person name="Holden M.T.G."/>
            <person name="Sebaihia M."/>
            <person name="Baker S."/>
            <person name="Basham D."/>
            <person name="Brooks K."/>
            <person name="Chillingworth T."/>
            <person name="Connerton P."/>
            <person name="Cronin A."/>
            <person name="Davis P."/>
            <person name="Davies R.M."/>
            <person name="Dowd L."/>
            <person name="White N."/>
            <person name="Farrar J."/>
            <person name="Feltwell T."/>
            <person name="Hamlin N."/>
            <person name="Haque A."/>
            <person name="Hien T.T."/>
            <person name="Holroyd S."/>
            <person name="Jagels K."/>
            <person name="Krogh A."/>
            <person name="Larsen T.S."/>
            <person name="Leather S."/>
            <person name="Moule S."/>
            <person name="O'Gaora P."/>
            <person name="Parry C."/>
            <person name="Quail M.A."/>
            <person name="Rutherford K.M."/>
            <person name="Simmonds M."/>
            <person name="Skelton J."/>
            <person name="Stevens K."/>
            <person name="Whitehead S."/>
            <person name="Barrell B.G."/>
        </authorList>
    </citation>
    <scope>NUCLEOTIDE SEQUENCE [LARGE SCALE GENOMIC DNA]</scope>
    <source>
        <strain>CT18</strain>
    </source>
</reference>
<reference key="2">
    <citation type="journal article" date="2003" name="J. Bacteriol.">
        <title>Comparative genomics of Salmonella enterica serovar Typhi strains Ty2 and CT18.</title>
        <authorList>
            <person name="Deng W."/>
            <person name="Liou S.-R."/>
            <person name="Plunkett G. III"/>
            <person name="Mayhew G.F."/>
            <person name="Rose D.J."/>
            <person name="Burland V."/>
            <person name="Kodoyianni V."/>
            <person name="Schwartz D.C."/>
            <person name="Blattner F.R."/>
        </authorList>
    </citation>
    <scope>NUCLEOTIDE SEQUENCE [LARGE SCALE GENOMIC DNA]</scope>
    <source>
        <strain>ATCC 700931 / Ty2</strain>
    </source>
</reference>
<accession>P64077</accession>
<accession>Q8XGP6</accession>
<comment type="function">
    <text evidence="2">Catalyzes the reversible conversion of 2-phosphoglycerate (2-PG) into phosphoenolpyruvate (PEP). It is essential for the degradation of carbohydrates via glycolysis.</text>
</comment>
<comment type="catalytic activity">
    <reaction evidence="2">
        <text>(2R)-2-phosphoglycerate = phosphoenolpyruvate + H2O</text>
        <dbReference type="Rhea" id="RHEA:10164"/>
        <dbReference type="ChEBI" id="CHEBI:15377"/>
        <dbReference type="ChEBI" id="CHEBI:58289"/>
        <dbReference type="ChEBI" id="CHEBI:58702"/>
        <dbReference type="EC" id="4.2.1.11"/>
    </reaction>
</comment>
<comment type="cofactor">
    <cofactor evidence="2">
        <name>Mg(2+)</name>
        <dbReference type="ChEBI" id="CHEBI:18420"/>
    </cofactor>
    <text evidence="2">Binds a second Mg(2+) ion via substrate during catalysis.</text>
</comment>
<comment type="pathway">
    <text evidence="2">Carbohydrate degradation; glycolysis; pyruvate from D-glyceraldehyde 3-phosphate: step 4/5.</text>
</comment>
<comment type="subunit">
    <text evidence="2">Component of the RNA degradosome, a multiprotein complex involved in RNA processing and mRNA degradation.</text>
</comment>
<comment type="subcellular location">
    <subcellularLocation>
        <location evidence="2">Cytoplasm</location>
    </subcellularLocation>
    <subcellularLocation>
        <location evidence="2">Secreted</location>
    </subcellularLocation>
    <subcellularLocation>
        <location evidence="2">Cell surface</location>
    </subcellularLocation>
    <text evidence="2">Fractions of enolase are present in both the cytoplasm and on the cell surface.</text>
</comment>
<comment type="similarity">
    <text evidence="2">Belongs to the enolase family.</text>
</comment>
<gene>
    <name evidence="2" type="primary">eno</name>
    <name type="ordered locus">STY3081</name>
    <name type="ordered locus">t2853</name>
</gene>
<feature type="initiator methionine" description="Removed" evidence="1">
    <location>
        <position position="1"/>
    </location>
</feature>
<feature type="chain" id="PRO_0000133959" description="Enolase">
    <location>
        <begin position="2"/>
        <end position="432"/>
    </location>
</feature>
<feature type="active site" description="Proton donor" evidence="2">
    <location>
        <position position="209"/>
    </location>
</feature>
<feature type="active site" description="Proton acceptor" evidence="2">
    <location>
        <position position="342"/>
    </location>
</feature>
<feature type="binding site" evidence="2">
    <location>
        <position position="167"/>
    </location>
    <ligand>
        <name>(2R)-2-phosphoglycerate</name>
        <dbReference type="ChEBI" id="CHEBI:58289"/>
    </ligand>
</feature>
<feature type="binding site" evidence="2">
    <location>
        <position position="246"/>
    </location>
    <ligand>
        <name>Mg(2+)</name>
        <dbReference type="ChEBI" id="CHEBI:18420"/>
    </ligand>
</feature>
<feature type="binding site" evidence="2">
    <location>
        <position position="290"/>
    </location>
    <ligand>
        <name>Mg(2+)</name>
        <dbReference type="ChEBI" id="CHEBI:18420"/>
    </ligand>
</feature>
<feature type="binding site" evidence="2">
    <location>
        <position position="317"/>
    </location>
    <ligand>
        <name>Mg(2+)</name>
        <dbReference type="ChEBI" id="CHEBI:18420"/>
    </ligand>
</feature>
<feature type="binding site" evidence="2">
    <location>
        <position position="342"/>
    </location>
    <ligand>
        <name>(2R)-2-phosphoglycerate</name>
        <dbReference type="ChEBI" id="CHEBI:58289"/>
    </ligand>
</feature>
<feature type="binding site" evidence="2">
    <location>
        <position position="371"/>
    </location>
    <ligand>
        <name>(2R)-2-phosphoglycerate</name>
        <dbReference type="ChEBI" id="CHEBI:58289"/>
    </ligand>
</feature>
<feature type="binding site" evidence="2">
    <location>
        <position position="372"/>
    </location>
    <ligand>
        <name>(2R)-2-phosphoglycerate</name>
        <dbReference type="ChEBI" id="CHEBI:58289"/>
    </ligand>
</feature>
<feature type="binding site" evidence="2">
    <location>
        <position position="393"/>
    </location>
    <ligand>
        <name>(2R)-2-phosphoglycerate</name>
        <dbReference type="ChEBI" id="CHEBI:58289"/>
    </ligand>
</feature>